<accession>A7TI28</accession>
<evidence type="ECO:0000250" key="1"/>
<evidence type="ECO:0000255" key="2"/>
<evidence type="ECO:0000255" key="3">
    <source>
        <dbReference type="PROSITE-ProRule" id="PRU00192"/>
    </source>
</evidence>
<evidence type="ECO:0000305" key="4"/>
<dbReference type="EMBL" id="DS480394">
    <property type="protein sequence ID" value="EDO18035.1"/>
    <property type="molecule type" value="Genomic_DNA"/>
</dbReference>
<dbReference type="RefSeq" id="XP_001645893.1">
    <property type="nucleotide sequence ID" value="XM_001645843.1"/>
</dbReference>
<dbReference type="SMR" id="A7TI28"/>
<dbReference type="FunCoup" id="A7TI28">
    <property type="interactions" value="215"/>
</dbReference>
<dbReference type="STRING" id="436907.A7TI28"/>
<dbReference type="GeneID" id="5546304"/>
<dbReference type="KEGG" id="vpo:Kpol_1045p21"/>
<dbReference type="eggNOG" id="ENOG502QW7A">
    <property type="taxonomic scope" value="Eukaryota"/>
</dbReference>
<dbReference type="HOGENOM" id="CLU_043316_0_0_1"/>
<dbReference type="InParanoid" id="A7TI28"/>
<dbReference type="OMA" id="NIVWIFY"/>
<dbReference type="OrthoDB" id="5983572at2759"/>
<dbReference type="PhylomeDB" id="A7TI28"/>
<dbReference type="Proteomes" id="UP000000267">
    <property type="component" value="Unassembled WGS sequence"/>
</dbReference>
<dbReference type="GO" id="GO:0005935">
    <property type="term" value="C:cellular bud neck"/>
    <property type="evidence" value="ECO:0007669"/>
    <property type="project" value="EnsemblFungi"/>
</dbReference>
<dbReference type="GO" id="GO:0044697">
    <property type="term" value="C:HICS complex"/>
    <property type="evidence" value="ECO:0007669"/>
    <property type="project" value="EnsemblFungi"/>
</dbReference>
<dbReference type="GO" id="GO:0043332">
    <property type="term" value="C:mating projection tip"/>
    <property type="evidence" value="ECO:0007669"/>
    <property type="project" value="EnsemblFungi"/>
</dbReference>
<dbReference type="GO" id="GO:0005886">
    <property type="term" value="C:plasma membrane"/>
    <property type="evidence" value="ECO:0007669"/>
    <property type="project" value="UniProtKB-SubCell"/>
</dbReference>
<dbReference type="GO" id="GO:0005078">
    <property type="term" value="F:MAP-kinase scaffold activity"/>
    <property type="evidence" value="ECO:0007669"/>
    <property type="project" value="EnsemblFungi"/>
</dbReference>
<dbReference type="GO" id="GO:0005034">
    <property type="term" value="F:osmosensor activity"/>
    <property type="evidence" value="ECO:0007669"/>
    <property type="project" value="EnsemblFungi"/>
</dbReference>
<dbReference type="GO" id="GO:0030010">
    <property type="term" value="P:establishment of cell polarity"/>
    <property type="evidence" value="ECO:0007669"/>
    <property type="project" value="EnsemblFungi"/>
</dbReference>
<dbReference type="GO" id="GO:0007232">
    <property type="term" value="P:osmosensory signaling pathway via Sho1 osmosensor"/>
    <property type="evidence" value="ECO:0007669"/>
    <property type="project" value="EnsemblFungi"/>
</dbReference>
<dbReference type="GO" id="GO:0001402">
    <property type="term" value="P:signal transduction involved in filamentous growth"/>
    <property type="evidence" value="ECO:0007669"/>
    <property type="project" value="EnsemblFungi"/>
</dbReference>
<dbReference type="CDD" id="cd11855">
    <property type="entry name" value="SH3_Sho1p"/>
    <property type="match status" value="1"/>
</dbReference>
<dbReference type="FunFam" id="2.30.30.40:FF:000213">
    <property type="entry name" value="High osmolarity signaling protein SHO1"/>
    <property type="match status" value="1"/>
</dbReference>
<dbReference type="Gene3D" id="2.30.30.40">
    <property type="entry name" value="SH3 Domains"/>
    <property type="match status" value="1"/>
</dbReference>
<dbReference type="InterPro" id="IPR036028">
    <property type="entry name" value="SH3-like_dom_sf"/>
</dbReference>
<dbReference type="InterPro" id="IPR001452">
    <property type="entry name" value="SH3_domain"/>
</dbReference>
<dbReference type="InterPro" id="IPR035522">
    <property type="entry name" value="Sho1_SH3"/>
</dbReference>
<dbReference type="Pfam" id="PF00018">
    <property type="entry name" value="SH3_1"/>
    <property type="match status" value="1"/>
</dbReference>
<dbReference type="PRINTS" id="PR00452">
    <property type="entry name" value="SH3DOMAIN"/>
</dbReference>
<dbReference type="SMART" id="SM00326">
    <property type="entry name" value="SH3"/>
    <property type="match status" value="1"/>
</dbReference>
<dbReference type="SUPFAM" id="SSF50044">
    <property type="entry name" value="SH3-domain"/>
    <property type="match status" value="1"/>
</dbReference>
<dbReference type="PROSITE" id="PS50002">
    <property type="entry name" value="SH3"/>
    <property type="match status" value="1"/>
</dbReference>
<name>SHO1_VANPO</name>
<reference key="1">
    <citation type="journal article" date="2007" name="Proc. Natl. Acad. Sci. U.S.A.">
        <title>Independent sorting-out of thousands of duplicated gene pairs in two yeast species descended from a whole-genome duplication.</title>
        <authorList>
            <person name="Scannell D.R."/>
            <person name="Frank A.C."/>
            <person name="Conant G.C."/>
            <person name="Byrne K.P."/>
            <person name="Woolfit M."/>
            <person name="Wolfe K.H."/>
        </authorList>
    </citation>
    <scope>NUCLEOTIDE SEQUENCE [LARGE SCALE GENOMIC DNA]</scope>
    <source>
        <strain>ATCC 22028 / DSM 70294 / BCRC 21397 / CBS 2163 / NBRC 10782 / NRRL Y-8283 / UCD 57-17</strain>
    </source>
</reference>
<protein>
    <recommendedName>
        <fullName>High osmolarity signaling protein SHO1</fullName>
    </recommendedName>
    <alternativeName>
        <fullName>Osmosensor SHO1</fullName>
    </alternativeName>
</protein>
<proteinExistence type="inferred from homology"/>
<sequence length="358" mass="39785">MIPSRANAKARRAGHHVRHSFGISNLVGDPFAISTISISMISWVITLGGSIASATDRESFPRFTWWGIAYQALLLFIMIVIYCYDLVDYYKGFISSGSGVAFIYNTNSATNLVYSNGARKAAASAGVILLSVINLIWVFYYGGDNASPTNRWIDSFSLRGIRPSAYEDALIRSLRRRSAVHSRNLQNAALERENLHLSTNLYNGVDQNQNYVSAVGLTGFENTNPNSTNSNFNSPYRDQQNDEVISMQIRNPTDTLKTSNENVNTFVTESSNGNTETTMGDTLGLYSEFGDESFPYTARALYSYQADDADGYEVSFEQGEILKVSDIEGRWWKSKKETGEVGIIPSNYVQLIEDDEGI</sequence>
<comment type="function">
    <text evidence="1">Plasma membrane osmosensor that activates the high osmolarity glycerol (HOG) MAPK signaling pathway in response to high osmolarity.</text>
</comment>
<comment type="subunit">
    <text evidence="1">Forms homooligomers.</text>
</comment>
<comment type="subcellular location">
    <subcellularLocation>
        <location evidence="1">Cell membrane</location>
        <topology evidence="1">Multi-pass membrane protein</topology>
    </subcellularLocation>
</comment>
<comment type="similarity">
    <text evidence="4">Belongs to the SHO1 family.</text>
</comment>
<feature type="chain" id="PRO_0000410405" description="High osmolarity signaling protein SHO1">
    <location>
        <begin position="1"/>
        <end position="358"/>
    </location>
</feature>
<feature type="topological domain" description="Cytoplasmic" evidence="2">
    <location>
        <begin position="1"/>
        <end position="30"/>
    </location>
</feature>
<feature type="transmembrane region" description="Helical" evidence="2">
    <location>
        <begin position="31"/>
        <end position="51"/>
    </location>
</feature>
<feature type="topological domain" description="Extracellular" evidence="2">
    <location>
        <begin position="52"/>
        <end position="62"/>
    </location>
</feature>
<feature type="transmembrane region" description="Helical" evidence="2">
    <location>
        <begin position="63"/>
        <end position="83"/>
    </location>
</feature>
<feature type="topological domain" description="Cytoplasmic" evidence="2">
    <location>
        <begin position="84"/>
        <end position="88"/>
    </location>
</feature>
<feature type="transmembrane region" description="Helical" evidence="2">
    <location>
        <begin position="89"/>
        <end position="106"/>
    </location>
</feature>
<feature type="topological domain" description="Extracellular" evidence="2">
    <location>
        <begin position="107"/>
        <end position="120"/>
    </location>
</feature>
<feature type="transmembrane region" description="Helical" evidence="2">
    <location>
        <begin position="121"/>
        <end position="141"/>
    </location>
</feature>
<feature type="topological domain" description="Cytoplasmic" evidence="2">
    <location>
        <begin position="142"/>
        <end position="358"/>
    </location>
</feature>
<feature type="domain" description="SH3" evidence="3">
    <location>
        <begin position="293"/>
        <end position="354"/>
    </location>
</feature>
<gene>
    <name type="primary">SHO1</name>
    <name type="ORF">Kpol_1045p21</name>
</gene>
<organism>
    <name type="scientific">Vanderwaltozyma polyspora (strain ATCC 22028 / DSM 70294 / BCRC 21397 / CBS 2163 / NBRC 10782 / NRRL Y-8283 / UCD 57-17)</name>
    <name type="common">Kluyveromyces polysporus</name>
    <dbReference type="NCBI Taxonomy" id="436907"/>
    <lineage>
        <taxon>Eukaryota</taxon>
        <taxon>Fungi</taxon>
        <taxon>Dikarya</taxon>
        <taxon>Ascomycota</taxon>
        <taxon>Saccharomycotina</taxon>
        <taxon>Saccharomycetes</taxon>
        <taxon>Saccharomycetales</taxon>
        <taxon>Saccharomycetaceae</taxon>
        <taxon>Vanderwaltozyma</taxon>
    </lineage>
</organism>
<keyword id="KW-1003">Cell membrane</keyword>
<keyword id="KW-0472">Membrane</keyword>
<keyword id="KW-1185">Reference proteome</keyword>
<keyword id="KW-0728">SH3 domain</keyword>
<keyword id="KW-0346">Stress response</keyword>
<keyword id="KW-0812">Transmembrane</keyword>
<keyword id="KW-1133">Transmembrane helix</keyword>